<gene>
    <name evidence="2" type="primary">MT-ND2</name>
    <name type="synonym">MTND2</name>
    <name type="synonym">NADH2</name>
    <name type="synonym">ND2</name>
</gene>
<geneLocation type="mitochondrion"/>
<comment type="function">
    <text evidence="1">Core subunit of the mitochondrial membrane respiratory chain NADH dehydrogenase (Complex I) that is believed to belong to the minimal assembly required for catalysis. Complex I functions in the transfer of electrons from NADH to the respiratory chain. The immediate electron acceptor for the enzyme is believed to be ubiquinone (By similarity).</text>
</comment>
<comment type="catalytic activity">
    <reaction>
        <text>a ubiquinone + NADH + 5 H(+)(in) = a ubiquinol + NAD(+) + 4 H(+)(out)</text>
        <dbReference type="Rhea" id="RHEA:29091"/>
        <dbReference type="Rhea" id="RHEA-COMP:9565"/>
        <dbReference type="Rhea" id="RHEA-COMP:9566"/>
        <dbReference type="ChEBI" id="CHEBI:15378"/>
        <dbReference type="ChEBI" id="CHEBI:16389"/>
        <dbReference type="ChEBI" id="CHEBI:17976"/>
        <dbReference type="ChEBI" id="CHEBI:57540"/>
        <dbReference type="ChEBI" id="CHEBI:57945"/>
        <dbReference type="EC" id="7.1.1.2"/>
    </reaction>
</comment>
<comment type="subunit">
    <text evidence="2">Core subunit of respiratory chain NADH dehydrogenase (Complex I) which is composed of 45 different subunits. Interacts with TMEM242.</text>
</comment>
<comment type="subcellular location">
    <subcellularLocation>
        <location>Mitochondrion inner membrane</location>
        <topology>Multi-pass membrane protein</topology>
    </subcellularLocation>
</comment>
<comment type="similarity">
    <text evidence="4">Belongs to the complex I subunit 2 family.</text>
</comment>
<organism>
    <name type="scientific">Suncus etruscus</name>
    <name type="common">Etruscan shrew</name>
    <name type="synonym">White-toothed pygmy shrew</name>
    <dbReference type="NCBI Taxonomy" id="109475"/>
    <lineage>
        <taxon>Eukaryota</taxon>
        <taxon>Metazoa</taxon>
        <taxon>Chordata</taxon>
        <taxon>Craniata</taxon>
        <taxon>Vertebrata</taxon>
        <taxon>Euteleostomi</taxon>
        <taxon>Mammalia</taxon>
        <taxon>Eutheria</taxon>
        <taxon>Laurasiatheria</taxon>
        <taxon>Eulipotyphla</taxon>
        <taxon>Soricidae</taxon>
        <taxon>Crocidurinae</taxon>
        <taxon>Suncus</taxon>
    </lineage>
</organism>
<name>NU2M_SUNET</name>
<accession>Q2TQ12</accession>
<feature type="chain" id="PRO_0000226712" description="NADH-ubiquinone oxidoreductase chain 2">
    <location>
        <begin position="1"/>
        <end position="347"/>
    </location>
</feature>
<feature type="transmembrane region" description="Helical" evidence="3">
    <location>
        <begin position="1"/>
        <end position="21"/>
    </location>
</feature>
<feature type="transmembrane region" description="Helical" evidence="3">
    <location>
        <begin position="25"/>
        <end position="45"/>
    </location>
</feature>
<feature type="transmembrane region" description="Helical" evidence="3">
    <location>
        <begin position="60"/>
        <end position="80"/>
    </location>
</feature>
<feature type="transmembrane region" description="Helical" evidence="3">
    <location>
        <begin position="96"/>
        <end position="116"/>
    </location>
</feature>
<feature type="transmembrane region" description="Helical" evidence="3">
    <location>
        <begin position="127"/>
        <end position="147"/>
    </location>
</feature>
<feature type="transmembrane region" description="Helical" evidence="3">
    <location>
        <begin position="149"/>
        <end position="169"/>
    </location>
</feature>
<feature type="transmembrane region" description="Helical" evidence="3">
    <location>
        <begin position="178"/>
        <end position="198"/>
    </location>
</feature>
<feature type="transmembrane region" description="Helical" evidence="3">
    <location>
        <begin position="202"/>
        <end position="222"/>
    </location>
</feature>
<feature type="transmembrane region" description="Helical" evidence="3">
    <location>
        <begin position="239"/>
        <end position="259"/>
    </location>
</feature>
<feature type="transmembrane region" description="Helical" evidence="3">
    <location>
        <begin position="274"/>
        <end position="294"/>
    </location>
</feature>
<feature type="transmembrane region" description="Helical" evidence="3">
    <location>
        <begin position="326"/>
        <end position="346"/>
    </location>
</feature>
<sequence>MNPMIFIILLGTIMLGTSIVMTSSHWFLTWLGFEMNMMAVIPVLMKKYSPRSMEAATKYFLTQATASMILMLAIIINLMFSGQWTITNMDNFTASMLLTTALVMKLGLAPFHFWVPEVTQGVSLNSGLILLTWQKIAPLSLLYQIYPSINTNLLLIMSLLSIMIGGWGGLNQTQLRKIMAYSSIAHMGWMMAIMIYNPNLSLLNLFIYILMTSSMFMLLIFASTTSMLSLSLTWNKTPIITIMSLMVLLSLGGLPPLTGFMPKWMIIQELTKNNSVILPTLMAILALLNLFFYMRLTYSSALTMFPTMNNTKLTWQYQNTNILPMMMPLITMSTLALPLTPLFILLN</sequence>
<dbReference type="EC" id="7.1.1.2"/>
<dbReference type="EMBL" id="AY691840">
    <property type="protein sequence ID" value="AAW29763.1"/>
    <property type="molecule type" value="Genomic_DNA"/>
</dbReference>
<dbReference type="SMR" id="Q2TQ12"/>
<dbReference type="GO" id="GO:0005743">
    <property type="term" value="C:mitochondrial inner membrane"/>
    <property type="evidence" value="ECO:0007669"/>
    <property type="project" value="UniProtKB-SubCell"/>
</dbReference>
<dbReference type="GO" id="GO:0008137">
    <property type="term" value="F:NADH dehydrogenase (ubiquinone) activity"/>
    <property type="evidence" value="ECO:0007669"/>
    <property type="project" value="UniProtKB-EC"/>
</dbReference>
<dbReference type="GO" id="GO:0006120">
    <property type="term" value="P:mitochondrial electron transport, NADH to ubiquinone"/>
    <property type="evidence" value="ECO:0007669"/>
    <property type="project" value="InterPro"/>
</dbReference>
<dbReference type="InterPro" id="IPR050175">
    <property type="entry name" value="Complex_I_Subunit_2"/>
</dbReference>
<dbReference type="InterPro" id="IPR010933">
    <property type="entry name" value="NADH_DH_su2_C"/>
</dbReference>
<dbReference type="InterPro" id="IPR003917">
    <property type="entry name" value="NADH_UbQ_OxRdtase_chain2"/>
</dbReference>
<dbReference type="InterPro" id="IPR001750">
    <property type="entry name" value="ND/Mrp_TM"/>
</dbReference>
<dbReference type="PANTHER" id="PTHR46552">
    <property type="entry name" value="NADH-UBIQUINONE OXIDOREDUCTASE CHAIN 2"/>
    <property type="match status" value="1"/>
</dbReference>
<dbReference type="PANTHER" id="PTHR46552:SF1">
    <property type="entry name" value="NADH-UBIQUINONE OXIDOREDUCTASE CHAIN 2"/>
    <property type="match status" value="1"/>
</dbReference>
<dbReference type="Pfam" id="PF06444">
    <property type="entry name" value="NADH_dehy_S2_C"/>
    <property type="match status" value="1"/>
</dbReference>
<dbReference type="Pfam" id="PF00361">
    <property type="entry name" value="Proton_antipo_M"/>
    <property type="match status" value="1"/>
</dbReference>
<dbReference type="PRINTS" id="PR01436">
    <property type="entry name" value="NADHDHGNASE2"/>
</dbReference>
<keyword id="KW-0249">Electron transport</keyword>
<keyword id="KW-0472">Membrane</keyword>
<keyword id="KW-0496">Mitochondrion</keyword>
<keyword id="KW-0999">Mitochondrion inner membrane</keyword>
<keyword id="KW-0520">NAD</keyword>
<keyword id="KW-0679">Respiratory chain</keyword>
<keyword id="KW-1278">Translocase</keyword>
<keyword id="KW-0812">Transmembrane</keyword>
<keyword id="KW-1133">Transmembrane helix</keyword>
<keyword id="KW-0813">Transport</keyword>
<keyword id="KW-0830">Ubiquinone</keyword>
<evidence type="ECO:0000250" key="1"/>
<evidence type="ECO:0000250" key="2">
    <source>
        <dbReference type="UniProtKB" id="P03891"/>
    </source>
</evidence>
<evidence type="ECO:0000255" key="3"/>
<evidence type="ECO:0000305" key="4"/>
<proteinExistence type="inferred from homology"/>
<protein>
    <recommendedName>
        <fullName evidence="2">NADH-ubiquinone oxidoreductase chain 2</fullName>
        <ecNumber>7.1.1.2</ecNumber>
    </recommendedName>
    <alternativeName>
        <fullName>NADH dehydrogenase subunit 2</fullName>
    </alternativeName>
</protein>
<reference key="1">
    <citation type="submission" date="2004-07" db="EMBL/GenBank/DDBJ databases">
        <title>Phylogeny, phylogeography, and geographic variation of Sylvisorex howelli, an endemic shrew of the Eastern Arc mountains.</title>
        <authorList>
            <person name="Stanley W.T."/>
            <person name="Olson L.E."/>
        </authorList>
    </citation>
    <scope>NUCLEOTIDE SEQUENCE [GENOMIC DNA]</scope>
</reference>